<comment type="function">
    <text evidence="2 3">Small GTPase that is essential for the correct formation of the tangential divisions in early embryos. Associates with microtubule during mitosis and may function in the positioning of the division plane. May participate in the patterning of the early embryo at the octant-dermatogen transition (PubMed:17419841). Is crucial for normal development of the plant (PubMed:28475733).</text>
</comment>
<comment type="subunit">
    <text evidence="2">Heterodimer with QQT2.</text>
</comment>
<comment type="subcellular location">
    <subcellularLocation>
        <location evidence="2">Cytoplasm</location>
    </subcellularLocation>
    <subcellularLocation>
        <location evidence="2">Nucleus</location>
    </subcellularLocation>
    <subcellularLocation>
        <location evidence="2">Cytoplasm</location>
        <location evidence="2">Cytoskeleton</location>
        <location evidence="2">Spindle</location>
    </subcellularLocation>
    <subcellularLocation>
        <location evidence="2">Cytoplasm</location>
        <location evidence="2">Cytoskeleton</location>
        <location evidence="2">Phragmoplast</location>
    </subcellularLocation>
    <text evidence="2">During interphase, mainly expressed in the cytoplasm and weakly in the nucleus. Associated with microtubules during cell division.</text>
</comment>
<comment type="tissue specificity">
    <text evidence="2">Expressed in vascular tissues, root tips, apical and root meristematic regions, and floral primordia.</text>
</comment>
<comment type="developmental stage">
    <text evidence="2">During embryogenesis, expressed in the embryo from octant to torpedo stage.</text>
</comment>
<comment type="disruption phenotype">
    <text evidence="2">Embryonic lethality due to embryo development arrest at the octant stage.</text>
</comment>
<comment type="miscellaneous">
    <text evidence="3">Plants silencing QQT1 exhibit severe defects in growth and development, such as severely arrested stem growth, small size, formation of serrated leaves and abnormal structures of the shoot apical meristems.</text>
</comment>
<comment type="similarity">
    <text evidence="5">Belongs to the GPN-loop GTPase family.</text>
</comment>
<comment type="sequence caution" evidence="5">
    <conflict type="erroneous gene model prediction">
        <sequence resource="EMBL-CDS" id="BAB08336"/>
    </conflict>
</comment>
<reference key="1">
    <citation type="journal article" date="1997" name="DNA Res.">
        <title>Structural analysis of Arabidopsis thaliana chromosome 5. III. Sequence features of the regions of 1,191,918 bp covered by seventeen physically assigned P1 clones.</title>
        <authorList>
            <person name="Nakamura Y."/>
            <person name="Sato S."/>
            <person name="Kaneko T."/>
            <person name="Kotani H."/>
            <person name="Asamizu E."/>
            <person name="Miyajima N."/>
            <person name="Tabata S."/>
        </authorList>
    </citation>
    <scope>NUCLEOTIDE SEQUENCE [LARGE SCALE GENOMIC DNA]</scope>
    <source>
        <strain>cv. Columbia</strain>
    </source>
</reference>
<reference key="2">
    <citation type="journal article" date="2017" name="Plant J.">
        <title>Araport11: a complete reannotation of the Arabidopsis thaliana reference genome.</title>
        <authorList>
            <person name="Cheng C.Y."/>
            <person name="Krishnakumar V."/>
            <person name="Chan A.P."/>
            <person name="Thibaud-Nissen F."/>
            <person name="Schobel S."/>
            <person name="Town C.D."/>
        </authorList>
    </citation>
    <scope>GENOME REANNOTATION</scope>
    <source>
        <strain>cv. Columbia</strain>
    </source>
</reference>
<reference key="3">
    <citation type="submission" date="2005-03" db="EMBL/GenBank/DDBJ databases">
        <title>Large-scale analysis of RIKEN Arabidopsis full-length (RAFL) cDNAs.</title>
        <authorList>
            <person name="Totoki Y."/>
            <person name="Seki M."/>
            <person name="Ishida J."/>
            <person name="Nakajima M."/>
            <person name="Enju A."/>
            <person name="Kamiya A."/>
            <person name="Narusaka M."/>
            <person name="Shin-i T."/>
            <person name="Nakagawa M."/>
            <person name="Sakamoto N."/>
            <person name="Oishi K."/>
            <person name="Kohara Y."/>
            <person name="Kobayashi M."/>
            <person name="Toyoda A."/>
            <person name="Sakaki Y."/>
            <person name="Sakurai T."/>
            <person name="Iida K."/>
            <person name="Akiyama K."/>
            <person name="Satou M."/>
            <person name="Toyoda T."/>
            <person name="Konagaya A."/>
            <person name="Carninci P."/>
            <person name="Kawai J."/>
            <person name="Hayashizaki Y."/>
            <person name="Shinozaki K."/>
        </authorList>
    </citation>
    <scope>NUCLEOTIDE SEQUENCE [LARGE SCALE MRNA]</scope>
    <source>
        <strain>cv. Columbia</strain>
    </source>
</reference>
<reference key="4">
    <citation type="journal article" date="2007" name="Plant J.">
        <title>QQT proteins colocalize with microtubules and are essential for early embryo development in Arabidopsis.</title>
        <authorList>
            <person name="Lahmy S."/>
            <person name="Guilleminot J."/>
            <person name="Schmit A.C."/>
            <person name="Pelletier G."/>
            <person name="Chaboute M.E."/>
            <person name="Devic M."/>
        </authorList>
    </citation>
    <scope>FUNCTION</scope>
    <scope>INTERACTION WITH QQT2</scope>
    <scope>SUBCELLULAR LOCATION</scope>
    <scope>TISSUE SPECIFICITY</scope>
    <scope>DEVELOPMENTAL STAGE</scope>
    <scope>DISRUPTION PHENOTYPE</scope>
</reference>
<reference key="5">
    <citation type="journal article" date="2017" name="J. Exp. Bot.">
        <title>quatre-quart1 is an indispensable U12 intron-containing gene that plays a crucial role in Arabidopsis development.</title>
        <authorList>
            <person name="Kwak K.J."/>
            <person name="Kim B.M."/>
            <person name="Lee K."/>
            <person name="Kang H."/>
        </authorList>
    </citation>
    <scope>FUNCTION</scope>
</reference>
<name>QQT1_ARATH</name>
<proteinExistence type="evidence at protein level"/>
<protein>
    <recommendedName>
        <fullName evidence="5">GPN-loop GTPase QQT1</fullName>
        <ecNumber evidence="5">3.6.5.-</ecNumber>
    </recommendedName>
    <alternativeName>
        <fullName evidence="4">Protein EMBRYO DEFECTIVE 1705</fullName>
    </alternativeName>
    <alternativeName>
        <fullName evidence="4">Protein QUATRE QUART 1</fullName>
    </alternativeName>
</protein>
<organism>
    <name type="scientific">Arabidopsis thaliana</name>
    <name type="common">Mouse-ear cress</name>
    <dbReference type="NCBI Taxonomy" id="3702"/>
    <lineage>
        <taxon>Eukaryota</taxon>
        <taxon>Viridiplantae</taxon>
        <taxon>Streptophyta</taxon>
        <taxon>Embryophyta</taxon>
        <taxon>Tracheophyta</taxon>
        <taxon>Spermatophyta</taxon>
        <taxon>Magnoliopsida</taxon>
        <taxon>eudicotyledons</taxon>
        <taxon>Gunneridae</taxon>
        <taxon>Pentapetalae</taxon>
        <taxon>rosids</taxon>
        <taxon>malvids</taxon>
        <taxon>Brassicales</taxon>
        <taxon>Brassicaceae</taxon>
        <taxon>Camelineae</taxon>
        <taxon>Arabidopsis</taxon>
    </lineage>
</organism>
<evidence type="ECO:0000250" key="1">
    <source>
        <dbReference type="UniProtKB" id="Q9UYR9"/>
    </source>
</evidence>
<evidence type="ECO:0000269" key="2">
    <source>
    </source>
</evidence>
<evidence type="ECO:0000269" key="3">
    <source>
    </source>
</evidence>
<evidence type="ECO:0000303" key="4">
    <source>
    </source>
</evidence>
<evidence type="ECO:0000305" key="5"/>
<evidence type="ECO:0000312" key="6">
    <source>
        <dbReference type="Araport" id="AT5G22370"/>
    </source>
</evidence>
<evidence type="ECO:0000312" key="7">
    <source>
        <dbReference type="EMBL" id="BAB08336.1"/>
    </source>
</evidence>
<sequence>MVFGQVVIGPPGSGKTTYCNGMSQFLSLMGRKVAIVNLDPANDALPYECGVNIEELIKLEDVMSEHSLGPNGGLVYCMEYLEKNIDWLESKLKPLLKDHYILFDFPGQVELFFIHDSTKNVLTKLIKSLNLRLTAVQLIDSHLCCDPGNYVSSLLLSLSTMLHMELPHVNVLSKIDLIGSYGKLAFNLDFYTDVQDLSYLEHHLSQDPRSAKYRKLTKELCSVIEDYSLVNFTTLDIQDKESVGDLVKLIDKSNGYIFAGIDASVVEYSKIAIGQTDWDYNRVAAVQEKYMEDEEIQD</sequence>
<dbReference type="EC" id="3.6.5.-" evidence="5"/>
<dbReference type="EMBL" id="AB007651">
    <property type="protein sequence ID" value="BAB08336.1"/>
    <property type="status" value="ALT_SEQ"/>
    <property type="molecule type" value="Genomic_DNA"/>
</dbReference>
<dbReference type="EMBL" id="CP002688">
    <property type="protein sequence ID" value="AED93018.1"/>
    <property type="molecule type" value="Genomic_DNA"/>
</dbReference>
<dbReference type="EMBL" id="CP002688">
    <property type="protein sequence ID" value="AED93019.1"/>
    <property type="molecule type" value="Genomic_DNA"/>
</dbReference>
<dbReference type="EMBL" id="CP002688">
    <property type="protein sequence ID" value="ANM70766.1"/>
    <property type="molecule type" value="Genomic_DNA"/>
</dbReference>
<dbReference type="EMBL" id="AK221541">
    <property type="protein sequence ID" value="BAD94895.1"/>
    <property type="molecule type" value="mRNA"/>
</dbReference>
<dbReference type="RefSeq" id="NP_001119261.1">
    <property type="nucleotide sequence ID" value="NM_001125789.1"/>
</dbReference>
<dbReference type="RefSeq" id="NP_001332350.1">
    <property type="nucleotide sequence ID" value="NM_001343725.1"/>
</dbReference>
<dbReference type="RefSeq" id="NP_197629.2">
    <property type="nucleotide sequence ID" value="NM_122142.4"/>
</dbReference>
<dbReference type="SMR" id="Q56XY2"/>
<dbReference type="FunCoup" id="Q56XY2">
    <property type="interactions" value="4551"/>
</dbReference>
<dbReference type="IntAct" id="Q56XY2">
    <property type="interactions" value="1"/>
</dbReference>
<dbReference type="STRING" id="3702.Q56XY2"/>
<dbReference type="iPTMnet" id="Q56XY2"/>
<dbReference type="PaxDb" id="3702-AT5G22370.1"/>
<dbReference type="ProteomicsDB" id="226029"/>
<dbReference type="EnsemblPlants" id="AT5G22370.1">
    <property type="protein sequence ID" value="AT5G22370.1"/>
    <property type="gene ID" value="AT5G22370"/>
</dbReference>
<dbReference type="EnsemblPlants" id="AT5G22370.2">
    <property type="protein sequence ID" value="AT5G22370.2"/>
    <property type="gene ID" value="AT5G22370"/>
</dbReference>
<dbReference type="EnsemblPlants" id="AT5G22370.3">
    <property type="protein sequence ID" value="AT5G22370.3"/>
    <property type="gene ID" value="AT5G22370"/>
</dbReference>
<dbReference type="GeneID" id="832298"/>
<dbReference type="Gramene" id="AT5G22370.1">
    <property type="protein sequence ID" value="AT5G22370.1"/>
    <property type="gene ID" value="AT5G22370"/>
</dbReference>
<dbReference type="Gramene" id="AT5G22370.2">
    <property type="protein sequence ID" value="AT5G22370.2"/>
    <property type="gene ID" value="AT5G22370"/>
</dbReference>
<dbReference type="Gramene" id="AT5G22370.3">
    <property type="protein sequence ID" value="AT5G22370.3"/>
    <property type="gene ID" value="AT5G22370"/>
</dbReference>
<dbReference type="KEGG" id="ath:AT5G22370"/>
<dbReference type="Araport" id="AT5G22370"/>
<dbReference type="TAIR" id="AT5G22370">
    <property type="gene designation" value="QQT1"/>
</dbReference>
<dbReference type="eggNOG" id="KOG1533">
    <property type="taxonomic scope" value="Eukaryota"/>
</dbReference>
<dbReference type="HOGENOM" id="CLU_037460_0_2_1"/>
<dbReference type="InParanoid" id="Q56XY2"/>
<dbReference type="OMA" id="ATHNYFL"/>
<dbReference type="PhylomeDB" id="Q56XY2"/>
<dbReference type="PRO" id="PR:Q56XY2"/>
<dbReference type="Proteomes" id="UP000006548">
    <property type="component" value="Chromosome 5"/>
</dbReference>
<dbReference type="ExpressionAtlas" id="Q56XY2">
    <property type="expression patterns" value="baseline and differential"/>
</dbReference>
<dbReference type="GO" id="GO:0005874">
    <property type="term" value="C:microtubule"/>
    <property type="evidence" value="ECO:0000314"/>
    <property type="project" value="TAIR"/>
</dbReference>
<dbReference type="GO" id="GO:0005634">
    <property type="term" value="C:nucleus"/>
    <property type="evidence" value="ECO:0007669"/>
    <property type="project" value="UniProtKB-SubCell"/>
</dbReference>
<dbReference type="GO" id="GO:0009524">
    <property type="term" value="C:phragmoplast"/>
    <property type="evidence" value="ECO:0007669"/>
    <property type="project" value="UniProtKB-SubCell"/>
</dbReference>
<dbReference type="GO" id="GO:0005819">
    <property type="term" value="C:spindle"/>
    <property type="evidence" value="ECO:0007669"/>
    <property type="project" value="UniProtKB-SubCell"/>
</dbReference>
<dbReference type="GO" id="GO:0005525">
    <property type="term" value="F:GTP binding"/>
    <property type="evidence" value="ECO:0007669"/>
    <property type="project" value="UniProtKB-KW"/>
</dbReference>
<dbReference type="GO" id="GO:0016787">
    <property type="term" value="F:hydrolase activity"/>
    <property type="evidence" value="ECO:0007669"/>
    <property type="project" value="UniProtKB-KW"/>
</dbReference>
<dbReference type="GO" id="GO:0051301">
    <property type="term" value="P:cell division"/>
    <property type="evidence" value="ECO:0000315"/>
    <property type="project" value="TAIR"/>
</dbReference>
<dbReference type="GO" id="GO:0009658">
    <property type="term" value="P:chloroplast organization"/>
    <property type="evidence" value="ECO:0000315"/>
    <property type="project" value="TAIR"/>
</dbReference>
<dbReference type="GO" id="GO:0032502">
    <property type="term" value="P:developmental process"/>
    <property type="evidence" value="ECO:0000315"/>
    <property type="project" value="TAIR"/>
</dbReference>
<dbReference type="GO" id="GO:0009793">
    <property type="term" value="P:embryo development ending in seed dormancy"/>
    <property type="evidence" value="ECO:0000315"/>
    <property type="project" value="TAIR"/>
</dbReference>
<dbReference type="GO" id="GO:1902182">
    <property type="term" value="P:shoot apical meristem development"/>
    <property type="evidence" value="ECO:0000315"/>
    <property type="project" value="TAIR"/>
</dbReference>
<dbReference type="CDD" id="cd17871">
    <property type="entry name" value="GPN2"/>
    <property type="match status" value="1"/>
</dbReference>
<dbReference type="FunFam" id="3.40.50.300:FF:000338">
    <property type="entry name" value="GPN-loop GTPase 2"/>
    <property type="match status" value="1"/>
</dbReference>
<dbReference type="Gene3D" id="3.40.50.300">
    <property type="entry name" value="P-loop containing nucleotide triphosphate hydrolases"/>
    <property type="match status" value="1"/>
</dbReference>
<dbReference type="InterPro" id="IPR004130">
    <property type="entry name" value="Gpn"/>
</dbReference>
<dbReference type="InterPro" id="IPR030231">
    <property type="entry name" value="Gpn2"/>
</dbReference>
<dbReference type="InterPro" id="IPR027417">
    <property type="entry name" value="P-loop_NTPase"/>
</dbReference>
<dbReference type="PANTHER" id="PTHR21231:SF3">
    <property type="entry name" value="GPN-LOOP GTPASE 2"/>
    <property type="match status" value="1"/>
</dbReference>
<dbReference type="PANTHER" id="PTHR21231">
    <property type="entry name" value="XPA-BINDING PROTEIN 1-RELATED"/>
    <property type="match status" value="1"/>
</dbReference>
<dbReference type="Pfam" id="PF03029">
    <property type="entry name" value="ATP_bind_1"/>
    <property type="match status" value="1"/>
</dbReference>
<dbReference type="SUPFAM" id="SSF52540">
    <property type="entry name" value="P-loop containing nucleoside triphosphate hydrolases"/>
    <property type="match status" value="1"/>
</dbReference>
<keyword id="KW-0963">Cytoplasm</keyword>
<keyword id="KW-0206">Cytoskeleton</keyword>
<keyword id="KW-0342">GTP-binding</keyword>
<keyword id="KW-0378">Hydrolase</keyword>
<keyword id="KW-0547">Nucleotide-binding</keyword>
<keyword id="KW-0539">Nucleus</keyword>
<keyword id="KW-1185">Reference proteome</keyword>
<accession>Q56XY2</accession>
<accession>Q9FMR4</accession>
<gene>
    <name evidence="4" type="primary">QQT1</name>
    <name evidence="4" type="synonym">EMB1705</name>
    <name evidence="6" type="ordered locus">At5g22370</name>
    <name evidence="7" type="ORF">MWD9.17</name>
</gene>
<feature type="chain" id="PRO_0000443286" description="GPN-loop GTPase QQT1">
    <location>
        <begin position="1"/>
        <end position="298"/>
    </location>
</feature>
<feature type="short sequence motif" description="Gly-Pro-Asn (GPN)-loop; involved in dimer interface" evidence="1">
    <location>
        <begin position="69"/>
        <end position="71"/>
    </location>
</feature>
<feature type="binding site" evidence="1">
    <location>
        <begin position="12"/>
        <end position="17"/>
    </location>
    <ligand>
        <name>GTP</name>
        <dbReference type="ChEBI" id="CHEBI:37565"/>
    </ligand>
</feature>
<feature type="binding site" evidence="1">
    <location>
        <begin position="173"/>
        <end position="176"/>
    </location>
    <ligand>
        <name>GTP</name>
        <dbReference type="ChEBI" id="CHEBI:37565"/>
    </ligand>
</feature>
<feature type="site" description="Stabilizes the phosphate intermediate; shared with dimeric partner" evidence="1">
    <location>
        <position position="71"/>
    </location>
</feature>